<dbReference type="EC" id="1.17.7.3" evidence="1"/>
<dbReference type="EMBL" id="CP001407">
    <property type="protein sequence ID" value="ACO27220.1"/>
    <property type="molecule type" value="Genomic_DNA"/>
</dbReference>
<dbReference type="SMR" id="C1ES01"/>
<dbReference type="KEGG" id="bcx:BCA_4390"/>
<dbReference type="PATRIC" id="fig|572264.18.peg.4338"/>
<dbReference type="UniPathway" id="UPA00056">
    <property type="reaction ID" value="UER00096"/>
</dbReference>
<dbReference type="Proteomes" id="UP000002210">
    <property type="component" value="Chromosome"/>
</dbReference>
<dbReference type="GO" id="GO:0051539">
    <property type="term" value="F:4 iron, 4 sulfur cluster binding"/>
    <property type="evidence" value="ECO:0007669"/>
    <property type="project" value="UniProtKB-UniRule"/>
</dbReference>
<dbReference type="GO" id="GO:0046429">
    <property type="term" value="F:4-hydroxy-3-methylbut-2-en-1-yl diphosphate synthase activity (ferredoxin)"/>
    <property type="evidence" value="ECO:0007669"/>
    <property type="project" value="UniProtKB-UniRule"/>
</dbReference>
<dbReference type="GO" id="GO:0141197">
    <property type="term" value="F:4-hydroxy-3-methylbut-2-enyl-diphosphate synthase activity (flavodoxin)"/>
    <property type="evidence" value="ECO:0007669"/>
    <property type="project" value="UniProtKB-EC"/>
</dbReference>
<dbReference type="GO" id="GO:0005506">
    <property type="term" value="F:iron ion binding"/>
    <property type="evidence" value="ECO:0007669"/>
    <property type="project" value="InterPro"/>
</dbReference>
<dbReference type="GO" id="GO:0019288">
    <property type="term" value="P:isopentenyl diphosphate biosynthetic process, methylerythritol 4-phosphate pathway"/>
    <property type="evidence" value="ECO:0007669"/>
    <property type="project" value="UniProtKB-UniRule"/>
</dbReference>
<dbReference type="GO" id="GO:0016114">
    <property type="term" value="P:terpenoid biosynthetic process"/>
    <property type="evidence" value="ECO:0007669"/>
    <property type="project" value="InterPro"/>
</dbReference>
<dbReference type="FunFam" id="3.20.20.20:FF:000001">
    <property type="entry name" value="4-hydroxy-3-methylbut-2-en-1-yl diphosphate synthase (flavodoxin)"/>
    <property type="match status" value="1"/>
</dbReference>
<dbReference type="FunFam" id="3.30.413.10:FF:000005">
    <property type="entry name" value="4-hydroxy-3-methylbut-2-en-1-yl diphosphate synthase (flavodoxin)"/>
    <property type="match status" value="1"/>
</dbReference>
<dbReference type="Gene3D" id="3.20.20.20">
    <property type="entry name" value="Dihydropteroate synthase-like"/>
    <property type="match status" value="1"/>
</dbReference>
<dbReference type="Gene3D" id="3.30.413.10">
    <property type="entry name" value="Sulfite Reductase Hemoprotein, domain 1"/>
    <property type="match status" value="1"/>
</dbReference>
<dbReference type="HAMAP" id="MF_00159">
    <property type="entry name" value="IspG"/>
    <property type="match status" value="1"/>
</dbReference>
<dbReference type="InterPro" id="IPR011005">
    <property type="entry name" value="Dihydropteroate_synth-like_sf"/>
</dbReference>
<dbReference type="InterPro" id="IPR016425">
    <property type="entry name" value="IspG_bac"/>
</dbReference>
<dbReference type="InterPro" id="IPR004588">
    <property type="entry name" value="IspG_bac-typ"/>
</dbReference>
<dbReference type="InterPro" id="IPR045854">
    <property type="entry name" value="NO2/SO3_Rdtase_4Fe4S_sf"/>
</dbReference>
<dbReference type="NCBIfam" id="TIGR00612">
    <property type="entry name" value="ispG_gcpE"/>
    <property type="match status" value="1"/>
</dbReference>
<dbReference type="NCBIfam" id="NF001540">
    <property type="entry name" value="PRK00366.1"/>
    <property type="match status" value="1"/>
</dbReference>
<dbReference type="PANTHER" id="PTHR30454">
    <property type="entry name" value="4-HYDROXY-3-METHYLBUT-2-EN-1-YL DIPHOSPHATE SYNTHASE"/>
    <property type="match status" value="1"/>
</dbReference>
<dbReference type="PANTHER" id="PTHR30454:SF0">
    <property type="entry name" value="4-HYDROXY-3-METHYLBUT-2-EN-1-YL DIPHOSPHATE SYNTHASE (FERREDOXIN), CHLOROPLASTIC"/>
    <property type="match status" value="1"/>
</dbReference>
<dbReference type="Pfam" id="PF04551">
    <property type="entry name" value="GcpE"/>
    <property type="match status" value="1"/>
</dbReference>
<dbReference type="PIRSF" id="PIRSF004640">
    <property type="entry name" value="IspG"/>
    <property type="match status" value="1"/>
</dbReference>
<dbReference type="SUPFAM" id="SSF51717">
    <property type="entry name" value="Dihydropteroate synthetase-like"/>
    <property type="match status" value="1"/>
</dbReference>
<dbReference type="SUPFAM" id="SSF56014">
    <property type="entry name" value="Nitrite and sulphite reductase 4Fe-4S domain-like"/>
    <property type="match status" value="1"/>
</dbReference>
<comment type="function">
    <text evidence="1">Converts 2C-methyl-D-erythritol 2,4-cyclodiphosphate (ME-2,4cPP) into 1-hydroxy-2-methyl-2-(E)-butenyl 4-diphosphate.</text>
</comment>
<comment type="catalytic activity">
    <reaction evidence="1">
        <text>(2E)-4-hydroxy-3-methylbut-2-enyl diphosphate + oxidized [flavodoxin] + H2O + 2 H(+) = 2-C-methyl-D-erythritol 2,4-cyclic diphosphate + reduced [flavodoxin]</text>
        <dbReference type="Rhea" id="RHEA:43604"/>
        <dbReference type="Rhea" id="RHEA-COMP:10622"/>
        <dbReference type="Rhea" id="RHEA-COMP:10623"/>
        <dbReference type="ChEBI" id="CHEBI:15377"/>
        <dbReference type="ChEBI" id="CHEBI:15378"/>
        <dbReference type="ChEBI" id="CHEBI:57618"/>
        <dbReference type="ChEBI" id="CHEBI:58210"/>
        <dbReference type="ChEBI" id="CHEBI:58483"/>
        <dbReference type="ChEBI" id="CHEBI:128753"/>
        <dbReference type="EC" id="1.17.7.3"/>
    </reaction>
</comment>
<comment type="cofactor">
    <cofactor evidence="1">
        <name>[4Fe-4S] cluster</name>
        <dbReference type="ChEBI" id="CHEBI:49883"/>
    </cofactor>
    <text evidence="1">Binds 1 [4Fe-4S] cluster.</text>
</comment>
<comment type="pathway">
    <text evidence="1">Isoprenoid biosynthesis; isopentenyl diphosphate biosynthesis via DXP pathway; isopentenyl diphosphate from 1-deoxy-D-xylulose 5-phosphate: step 5/6.</text>
</comment>
<comment type="similarity">
    <text evidence="1">Belongs to the IspG family.</text>
</comment>
<gene>
    <name evidence="1" type="primary">ispG</name>
    <name type="ordered locus">BCA_4390</name>
</gene>
<evidence type="ECO:0000255" key="1">
    <source>
        <dbReference type="HAMAP-Rule" id="MF_00159"/>
    </source>
</evidence>
<sequence>MNEMTHRTKTRPVKVGNLTIGGNNELIIQSMTTTKTHDVEATVAEIKRLEEAGCQVVRVAVPDERAANAIADIKKQINIPLVADIHFDYRLALKAIEGGIDKVRINPGNIGRRHKVEAVVNAAKERGIPIRIGVNAGSLERHILEKYGYPTADGMVESALHHIKILEDLDFHDIIVSMKASDVNLAIEAYEKAARAFDYPLHLGITESGTLFAGTVKSAAGLGAILNKGIGNTLRISLSADPVEEVKVARELLKSFGLASNAATLISCPTCGRIEIDLISIANEVEEYISTLQVPIKVAVLGCAVNGPGEAREADIGIAGARGEGLLFRKGQVVRKVPEEIMVEELKKEIDVIAAEMAAEREKEKETQEQ</sequence>
<keyword id="KW-0004">4Fe-4S</keyword>
<keyword id="KW-0408">Iron</keyword>
<keyword id="KW-0411">Iron-sulfur</keyword>
<keyword id="KW-0414">Isoprene biosynthesis</keyword>
<keyword id="KW-0479">Metal-binding</keyword>
<keyword id="KW-0560">Oxidoreductase</keyword>
<protein>
    <recommendedName>
        <fullName evidence="1">4-hydroxy-3-methylbut-2-en-1-yl diphosphate synthase (flavodoxin)</fullName>
        <ecNumber evidence="1">1.17.7.3</ecNumber>
    </recommendedName>
    <alternativeName>
        <fullName evidence="1">1-hydroxy-2-methyl-2-(E)-butenyl 4-diphosphate synthase</fullName>
    </alternativeName>
</protein>
<proteinExistence type="inferred from homology"/>
<accession>C1ES01</accession>
<feature type="chain" id="PRO_1000123434" description="4-hydroxy-3-methylbut-2-en-1-yl diphosphate synthase (flavodoxin)">
    <location>
        <begin position="1"/>
        <end position="370"/>
    </location>
</feature>
<feature type="binding site" evidence="1">
    <location>
        <position position="268"/>
    </location>
    <ligand>
        <name>[4Fe-4S] cluster</name>
        <dbReference type="ChEBI" id="CHEBI:49883"/>
    </ligand>
</feature>
<feature type="binding site" evidence="1">
    <location>
        <position position="271"/>
    </location>
    <ligand>
        <name>[4Fe-4S] cluster</name>
        <dbReference type="ChEBI" id="CHEBI:49883"/>
    </ligand>
</feature>
<feature type="binding site" evidence="1">
    <location>
        <position position="303"/>
    </location>
    <ligand>
        <name>[4Fe-4S] cluster</name>
        <dbReference type="ChEBI" id="CHEBI:49883"/>
    </ligand>
</feature>
<feature type="binding site" evidence="1">
    <location>
        <position position="310"/>
    </location>
    <ligand>
        <name>[4Fe-4S] cluster</name>
        <dbReference type="ChEBI" id="CHEBI:49883"/>
    </ligand>
</feature>
<name>ISPG_BACC3</name>
<reference key="1">
    <citation type="submission" date="2009-02" db="EMBL/GenBank/DDBJ databases">
        <title>Genome sequence of Bacillus cereus 03BB102.</title>
        <authorList>
            <person name="Dodson R.J."/>
            <person name="Jackson P."/>
            <person name="Munk A.C."/>
            <person name="Brettin T."/>
            <person name="Bruce D."/>
            <person name="Detter C."/>
            <person name="Tapia R."/>
            <person name="Han C."/>
            <person name="Sutton G."/>
            <person name="Sims D."/>
        </authorList>
    </citation>
    <scope>NUCLEOTIDE SEQUENCE [LARGE SCALE GENOMIC DNA]</scope>
    <source>
        <strain>03BB102</strain>
    </source>
</reference>
<organism>
    <name type="scientific">Bacillus cereus (strain 03BB102)</name>
    <dbReference type="NCBI Taxonomy" id="572264"/>
    <lineage>
        <taxon>Bacteria</taxon>
        <taxon>Bacillati</taxon>
        <taxon>Bacillota</taxon>
        <taxon>Bacilli</taxon>
        <taxon>Bacillales</taxon>
        <taxon>Bacillaceae</taxon>
        <taxon>Bacillus</taxon>
        <taxon>Bacillus cereus group</taxon>
    </lineage>
</organism>